<feature type="chain" id="PRO_0000352921" description="Threonylcarbamoyl-AMP synthase">
    <location>
        <begin position="1"/>
        <end position="190"/>
    </location>
</feature>
<feature type="domain" description="YrdC-like" evidence="1">
    <location>
        <begin position="7"/>
        <end position="190"/>
    </location>
</feature>
<dbReference type="EC" id="2.7.7.87" evidence="1"/>
<dbReference type="EMBL" id="CP000802">
    <property type="protein sequence ID" value="ABV07691.1"/>
    <property type="status" value="ALT_INIT"/>
    <property type="molecule type" value="Genomic_DNA"/>
</dbReference>
<dbReference type="RefSeq" id="WP_001301412.1">
    <property type="nucleotide sequence ID" value="NC_009800.1"/>
</dbReference>
<dbReference type="SMR" id="A8A587"/>
<dbReference type="KEGG" id="ecx:EcHS_A3476"/>
<dbReference type="HOGENOM" id="CLU_031397_6_0_6"/>
<dbReference type="GO" id="GO:0005737">
    <property type="term" value="C:cytoplasm"/>
    <property type="evidence" value="ECO:0007669"/>
    <property type="project" value="UniProtKB-SubCell"/>
</dbReference>
<dbReference type="GO" id="GO:0005524">
    <property type="term" value="F:ATP binding"/>
    <property type="evidence" value="ECO:0007669"/>
    <property type="project" value="UniProtKB-UniRule"/>
</dbReference>
<dbReference type="GO" id="GO:0003725">
    <property type="term" value="F:double-stranded RNA binding"/>
    <property type="evidence" value="ECO:0007669"/>
    <property type="project" value="InterPro"/>
</dbReference>
<dbReference type="GO" id="GO:0061710">
    <property type="term" value="F:L-threonylcarbamoyladenylate synthase"/>
    <property type="evidence" value="ECO:0007669"/>
    <property type="project" value="UniProtKB-EC"/>
</dbReference>
<dbReference type="GO" id="GO:0000049">
    <property type="term" value="F:tRNA binding"/>
    <property type="evidence" value="ECO:0007669"/>
    <property type="project" value="TreeGrafter"/>
</dbReference>
<dbReference type="GO" id="GO:0006450">
    <property type="term" value="P:regulation of translational fidelity"/>
    <property type="evidence" value="ECO:0007669"/>
    <property type="project" value="TreeGrafter"/>
</dbReference>
<dbReference type="GO" id="GO:0002949">
    <property type="term" value="P:tRNA threonylcarbamoyladenosine modification"/>
    <property type="evidence" value="ECO:0007669"/>
    <property type="project" value="UniProtKB-UniRule"/>
</dbReference>
<dbReference type="FunFam" id="3.90.870.10:FF:000004">
    <property type="entry name" value="Threonylcarbamoyl-AMP synthase"/>
    <property type="match status" value="1"/>
</dbReference>
<dbReference type="Gene3D" id="3.90.870.10">
    <property type="entry name" value="DHBP synthase"/>
    <property type="match status" value="1"/>
</dbReference>
<dbReference type="HAMAP" id="MF_01852">
    <property type="entry name" value="TsaC"/>
    <property type="match status" value="1"/>
</dbReference>
<dbReference type="InterPro" id="IPR017945">
    <property type="entry name" value="DHBP_synth_RibB-like_a/b_dom"/>
</dbReference>
<dbReference type="InterPro" id="IPR006070">
    <property type="entry name" value="Sua5-like_dom"/>
</dbReference>
<dbReference type="InterPro" id="IPR023535">
    <property type="entry name" value="TC-AMP_synthase"/>
</dbReference>
<dbReference type="InterPro" id="IPR050156">
    <property type="entry name" value="TC-AMP_synthase_SUA5"/>
</dbReference>
<dbReference type="NCBIfam" id="NF007919">
    <property type="entry name" value="PRK10634.1"/>
    <property type="match status" value="1"/>
</dbReference>
<dbReference type="PANTHER" id="PTHR17490">
    <property type="entry name" value="SUA5"/>
    <property type="match status" value="1"/>
</dbReference>
<dbReference type="PANTHER" id="PTHR17490:SF18">
    <property type="entry name" value="THREONYLCARBAMOYL-AMP SYNTHASE"/>
    <property type="match status" value="1"/>
</dbReference>
<dbReference type="Pfam" id="PF01300">
    <property type="entry name" value="Sua5_yciO_yrdC"/>
    <property type="match status" value="1"/>
</dbReference>
<dbReference type="SUPFAM" id="SSF55821">
    <property type="entry name" value="YrdC/RibB"/>
    <property type="match status" value="1"/>
</dbReference>
<dbReference type="PROSITE" id="PS51163">
    <property type="entry name" value="YRDC"/>
    <property type="match status" value="1"/>
</dbReference>
<sequence>MNNNLQRDAIAAAIDVLNEERVIAYPTEAVFGVGCDPDSETAVMRLLELKQRPVDKGLILIAANYEQLKPYIDDTMLTDVQRETIFSRWPGPVTFVFPAPATTPRWLTGRFDSLAVRVTDHPLVVALCQAYGKPLVSTSANLSGLPPCRTVDEVRAQFGAAFPVVPGETGGRLNPSEIRDALTGELFRQG</sequence>
<accession>A8A587</accession>
<evidence type="ECO:0000255" key="1">
    <source>
        <dbReference type="HAMAP-Rule" id="MF_01852"/>
    </source>
</evidence>
<evidence type="ECO:0000305" key="2"/>
<protein>
    <recommendedName>
        <fullName evidence="1">Threonylcarbamoyl-AMP synthase</fullName>
        <shortName evidence="1">TC-AMP synthase</shortName>
        <ecNumber evidence="1">2.7.7.87</ecNumber>
    </recommendedName>
    <alternativeName>
        <fullName evidence="1">L-threonylcarbamoyladenylate synthase</fullName>
    </alternativeName>
    <alternativeName>
        <fullName evidence="1">t(6)A37 threonylcarbamoyladenosine biosynthesis protein TsaC</fullName>
    </alternativeName>
    <alternativeName>
        <fullName evidence="1">tRNA threonylcarbamoyladenosine biosynthesis protein TsaC</fullName>
    </alternativeName>
</protein>
<comment type="function">
    <text evidence="1">Required for the formation of a threonylcarbamoyl group on adenosine at position 37 (t(6)A37) in tRNAs that read codons beginning with adenine. Catalyzes the conversion of L-threonine, HCO(3)(-)/CO(2) and ATP to give threonylcarbamoyl-AMP (TC-AMP) as the acyladenylate intermediate, with the release of diphosphate.</text>
</comment>
<comment type="catalytic activity">
    <reaction evidence="1">
        <text>L-threonine + hydrogencarbonate + ATP = L-threonylcarbamoyladenylate + diphosphate + H2O</text>
        <dbReference type="Rhea" id="RHEA:36407"/>
        <dbReference type="ChEBI" id="CHEBI:15377"/>
        <dbReference type="ChEBI" id="CHEBI:17544"/>
        <dbReference type="ChEBI" id="CHEBI:30616"/>
        <dbReference type="ChEBI" id="CHEBI:33019"/>
        <dbReference type="ChEBI" id="CHEBI:57926"/>
        <dbReference type="ChEBI" id="CHEBI:73682"/>
        <dbReference type="EC" id="2.7.7.87"/>
    </reaction>
</comment>
<comment type="subcellular location">
    <subcellularLocation>
        <location evidence="1">Cytoplasm</location>
    </subcellularLocation>
</comment>
<comment type="similarity">
    <text evidence="1">Belongs to the SUA5 family. TsaC subfamily.</text>
</comment>
<comment type="sequence caution" evidence="2">
    <conflict type="erroneous initiation">
        <sequence resource="EMBL-CDS" id="ABV07691"/>
    </conflict>
</comment>
<proteinExistence type="inferred from homology"/>
<name>TSAC_ECOHS</name>
<organism>
    <name type="scientific">Escherichia coli O9:H4 (strain HS)</name>
    <dbReference type="NCBI Taxonomy" id="331112"/>
    <lineage>
        <taxon>Bacteria</taxon>
        <taxon>Pseudomonadati</taxon>
        <taxon>Pseudomonadota</taxon>
        <taxon>Gammaproteobacteria</taxon>
        <taxon>Enterobacterales</taxon>
        <taxon>Enterobacteriaceae</taxon>
        <taxon>Escherichia</taxon>
    </lineage>
</organism>
<keyword id="KW-0067">ATP-binding</keyword>
<keyword id="KW-0963">Cytoplasm</keyword>
<keyword id="KW-0547">Nucleotide-binding</keyword>
<keyword id="KW-0548">Nucleotidyltransferase</keyword>
<keyword id="KW-0808">Transferase</keyword>
<keyword id="KW-0819">tRNA processing</keyword>
<gene>
    <name evidence="1" type="primary">tsaC</name>
    <name type="synonym">rimN</name>
    <name type="ordered locus">EcHS_A3476</name>
</gene>
<reference key="1">
    <citation type="journal article" date="2008" name="J. Bacteriol.">
        <title>The pangenome structure of Escherichia coli: comparative genomic analysis of E. coli commensal and pathogenic isolates.</title>
        <authorList>
            <person name="Rasko D.A."/>
            <person name="Rosovitz M.J."/>
            <person name="Myers G.S.A."/>
            <person name="Mongodin E.F."/>
            <person name="Fricke W.F."/>
            <person name="Gajer P."/>
            <person name="Crabtree J."/>
            <person name="Sebaihia M."/>
            <person name="Thomson N.R."/>
            <person name="Chaudhuri R."/>
            <person name="Henderson I.R."/>
            <person name="Sperandio V."/>
            <person name="Ravel J."/>
        </authorList>
    </citation>
    <scope>NUCLEOTIDE SEQUENCE [LARGE SCALE GENOMIC DNA]</scope>
    <source>
        <strain>HS</strain>
    </source>
</reference>